<proteinExistence type="inferred from homology"/>
<name>IDI2_RICBR</name>
<comment type="function">
    <text evidence="1">Involved in the biosynthesis of isoprenoids. Catalyzes the 1,3-allylic rearrangement of the homoallylic substrate isopentenyl (IPP) to its allylic isomer, dimethylallyl diphosphate (DMAPP).</text>
</comment>
<comment type="catalytic activity">
    <reaction evidence="1">
        <text>isopentenyl diphosphate = dimethylallyl diphosphate</text>
        <dbReference type="Rhea" id="RHEA:23284"/>
        <dbReference type="ChEBI" id="CHEBI:57623"/>
        <dbReference type="ChEBI" id="CHEBI:128769"/>
        <dbReference type="EC" id="5.3.3.2"/>
    </reaction>
</comment>
<comment type="cofactor">
    <cofactor evidence="1">
        <name>FMN</name>
        <dbReference type="ChEBI" id="CHEBI:58210"/>
    </cofactor>
</comment>
<comment type="cofactor">
    <cofactor evidence="1">
        <name>NADPH</name>
        <dbReference type="ChEBI" id="CHEBI:57783"/>
    </cofactor>
</comment>
<comment type="cofactor">
    <cofactor evidence="1">
        <name>Mg(2+)</name>
        <dbReference type="ChEBI" id="CHEBI:18420"/>
    </cofactor>
</comment>
<comment type="subunit">
    <text evidence="1">Homooctamer. Dimer of tetramers.</text>
</comment>
<comment type="subcellular location">
    <subcellularLocation>
        <location evidence="1">Cytoplasm</location>
    </subcellularLocation>
</comment>
<comment type="similarity">
    <text evidence="1">Belongs to the IPP isomerase type 2 family.</text>
</comment>
<protein>
    <recommendedName>
        <fullName evidence="1">Isopentenyl-diphosphate delta-isomerase</fullName>
        <shortName evidence="1">IPP isomerase</shortName>
        <ecNumber evidence="1">5.3.3.2</ecNumber>
    </recommendedName>
    <alternativeName>
        <fullName evidence="1">Isopentenyl diphosphate:dimethylallyl diphosphate isomerase</fullName>
    </alternativeName>
    <alternativeName>
        <fullName evidence="1">Isopentenyl pyrophosphate isomerase</fullName>
    </alternativeName>
    <alternativeName>
        <fullName evidence="1">Type 2 isopentenyl diphosphate isomerase</fullName>
        <shortName evidence="1">IDI-2</shortName>
    </alternativeName>
</protein>
<evidence type="ECO:0000255" key="1">
    <source>
        <dbReference type="HAMAP-Rule" id="MF_00354"/>
    </source>
</evidence>
<reference key="1">
    <citation type="journal article" date="2006" name="PLoS Genet.">
        <title>Genome sequence of Rickettsia bellii illuminates the role of amoebae in gene exchanges between intracellular pathogens.</title>
        <authorList>
            <person name="Ogata H."/>
            <person name="La Scola B."/>
            <person name="Audic S."/>
            <person name="Renesto P."/>
            <person name="Blanc G."/>
            <person name="Robert C."/>
            <person name="Fournier P.-E."/>
            <person name="Claverie J.-M."/>
            <person name="Raoult D."/>
        </authorList>
    </citation>
    <scope>NUCLEOTIDE SEQUENCE [LARGE SCALE GENOMIC DNA]</scope>
    <source>
        <strain>RML369-C</strain>
    </source>
</reference>
<dbReference type="EC" id="5.3.3.2" evidence="1"/>
<dbReference type="EMBL" id="CP000087">
    <property type="protein sequence ID" value="ABE04812.1"/>
    <property type="molecule type" value="Genomic_DNA"/>
</dbReference>
<dbReference type="RefSeq" id="WP_011477399.1">
    <property type="nucleotide sequence ID" value="NC_007940.1"/>
</dbReference>
<dbReference type="SMR" id="Q1RIK2"/>
<dbReference type="KEGG" id="rbe:RBE_0731"/>
<dbReference type="eggNOG" id="COG1304">
    <property type="taxonomic scope" value="Bacteria"/>
</dbReference>
<dbReference type="HOGENOM" id="CLU_065515_1_0_5"/>
<dbReference type="OrthoDB" id="9795032at2"/>
<dbReference type="Proteomes" id="UP000001951">
    <property type="component" value="Chromosome"/>
</dbReference>
<dbReference type="GO" id="GO:0005737">
    <property type="term" value="C:cytoplasm"/>
    <property type="evidence" value="ECO:0007669"/>
    <property type="project" value="UniProtKB-SubCell"/>
</dbReference>
<dbReference type="GO" id="GO:0010181">
    <property type="term" value="F:FMN binding"/>
    <property type="evidence" value="ECO:0007669"/>
    <property type="project" value="UniProtKB-UniRule"/>
</dbReference>
<dbReference type="GO" id="GO:0004452">
    <property type="term" value="F:isopentenyl-diphosphate delta-isomerase activity"/>
    <property type="evidence" value="ECO:0007669"/>
    <property type="project" value="UniProtKB-UniRule"/>
</dbReference>
<dbReference type="GO" id="GO:0000287">
    <property type="term" value="F:magnesium ion binding"/>
    <property type="evidence" value="ECO:0007669"/>
    <property type="project" value="UniProtKB-UniRule"/>
</dbReference>
<dbReference type="GO" id="GO:0070402">
    <property type="term" value="F:NADPH binding"/>
    <property type="evidence" value="ECO:0007669"/>
    <property type="project" value="UniProtKB-UniRule"/>
</dbReference>
<dbReference type="GO" id="GO:0016491">
    <property type="term" value="F:oxidoreductase activity"/>
    <property type="evidence" value="ECO:0007669"/>
    <property type="project" value="InterPro"/>
</dbReference>
<dbReference type="GO" id="GO:0008299">
    <property type="term" value="P:isoprenoid biosynthetic process"/>
    <property type="evidence" value="ECO:0007669"/>
    <property type="project" value="UniProtKB-UniRule"/>
</dbReference>
<dbReference type="CDD" id="cd02811">
    <property type="entry name" value="IDI-2_FMN"/>
    <property type="match status" value="1"/>
</dbReference>
<dbReference type="Gene3D" id="3.20.20.70">
    <property type="entry name" value="Aldolase class I"/>
    <property type="match status" value="1"/>
</dbReference>
<dbReference type="HAMAP" id="MF_00354">
    <property type="entry name" value="Idi_2"/>
    <property type="match status" value="1"/>
</dbReference>
<dbReference type="InterPro" id="IPR013785">
    <property type="entry name" value="Aldolase_TIM"/>
</dbReference>
<dbReference type="InterPro" id="IPR000262">
    <property type="entry name" value="FMN-dep_DH"/>
</dbReference>
<dbReference type="InterPro" id="IPR011179">
    <property type="entry name" value="IPdP_isomerase"/>
</dbReference>
<dbReference type="NCBIfam" id="TIGR02151">
    <property type="entry name" value="IPP_isom_2"/>
    <property type="match status" value="1"/>
</dbReference>
<dbReference type="PANTHER" id="PTHR43665">
    <property type="entry name" value="ISOPENTENYL-DIPHOSPHATE DELTA-ISOMERASE"/>
    <property type="match status" value="1"/>
</dbReference>
<dbReference type="PANTHER" id="PTHR43665:SF1">
    <property type="entry name" value="ISOPENTENYL-DIPHOSPHATE DELTA-ISOMERASE"/>
    <property type="match status" value="1"/>
</dbReference>
<dbReference type="Pfam" id="PF01070">
    <property type="entry name" value="FMN_dh"/>
    <property type="match status" value="2"/>
</dbReference>
<dbReference type="PIRSF" id="PIRSF003314">
    <property type="entry name" value="IPP_isomerase"/>
    <property type="match status" value="1"/>
</dbReference>
<dbReference type="SUPFAM" id="SSF51395">
    <property type="entry name" value="FMN-linked oxidoreductases"/>
    <property type="match status" value="1"/>
</dbReference>
<accession>Q1RIK2</accession>
<feature type="chain" id="PRO_0000277969" description="Isopentenyl-diphosphate delta-isomerase">
    <location>
        <begin position="1"/>
        <end position="342"/>
    </location>
</feature>
<feature type="binding site" evidence="1">
    <location>
        <begin position="6"/>
        <end position="7"/>
    </location>
    <ligand>
        <name>substrate</name>
    </ligand>
</feature>
<feature type="binding site" evidence="1">
    <location>
        <position position="63"/>
    </location>
    <ligand>
        <name>FMN</name>
        <dbReference type="ChEBI" id="CHEBI:58210"/>
    </ligand>
</feature>
<feature type="binding site" evidence="1">
    <location>
        <begin position="64"/>
        <end position="66"/>
    </location>
    <ligand>
        <name>FMN</name>
        <dbReference type="ChEBI" id="CHEBI:58210"/>
    </ligand>
</feature>
<feature type="binding site" evidence="1">
    <location>
        <begin position="94"/>
        <end position="96"/>
    </location>
    <ligand>
        <name>substrate</name>
    </ligand>
</feature>
<feature type="binding site" evidence="1">
    <location>
        <position position="94"/>
    </location>
    <ligand>
        <name>FMN</name>
        <dbReference type="ChEBI" id="CHEBI:58210"/>
    </ligand>
</feature>
<feature type="binding site" evidence="1">
    <location>
        <position position="122"/>
    </location>
    <ligand>
        <name>FMN</name>
        <dbReference type="ChEBI" id="CHEBI:58210"/>
    </ligand>
</feature>
<feature type="binding site" evidence="1">
    <location>
        <position position="157"/>
    </location>
    <ligand>
        <name>substrate</name>
    </ligand>
</feature>
<feature type="binding site" evidence="1">
    <location>
        <position position="158"/>
    </location>
    <ligand>
        <name>Mg(2+)</name>
        <dbReference type="ChEBI" id="CHEBI:18420"/>
    </ligand>
</feature>
<feature type="binding site" evidence="1">
    <location>
        <position position="189"/>
    </location>
    <ligand>
        <name>FMN</name>
        <dbReference type="ChEBI" id="CHEBI:58210"/>
    </ligand>
</feature>
<feature type="binding site" evidence="1">
    <location>
        <position position="219"/>
    </location>
    <ligand>
        <name>FMN</name>
        <dbReference type="ChEBI" id="CHEBI:58210"/>
    </ligand>
</feature>
<feature type="binding site" evidence="1">
    <location>
        <begin position="269"/>
        <end position="271"/>
    </location>
    <ligand>
        <name>FMN</name>
        <dbReference type="ChEBI" id="CHEBI:58210"/>
    </ligand>
</feature>
<feature type="binding site" evidence="1">
    <location>
        <begin position="290"/>
        <end position="291"/>
    </location>
    <ligand>
        <name>FMN</name>
        <dbReference type="ChEBI" id="CHEBI:58210"/>
    </ligand>
</feature>
<keyword id="KW-0963">Cytoplasm</keyword>
<keyword id="KW-0285">Flavoprotein</keyword>
<keyword id="KW-0288">FMN</keyword>
<keyword id="KW-0413">Isomerase</keyword>
<keyword id="KW-0414">Isoprene biosynthesis</keyword>
<keyword id="KW-0460">Magnesium</keyword>
<keyword id="KW-0479">Metal-binding</keyword>
<keyword id="KW-0521">NADP</keyword>
<organism>
    <name type="scientific">Rickettsia bellii (strain RML369-C)</name>
    <dbReference type="NCBI Taxonomy" id="336407"/>
    <lineage>
        <taxon>Bacteria</taxon>
        <taxon>Pseudomonadati</taxon>
        <taxon>Pseudomonadota</taxon>
        <taxon>Alphaproteobacteria</taxon>
        <taxon>Rickettsiales</taxon>
        <taxon>Rickettsiaceae</taxon>
        <taxon>Rickettsieae</taxon>
        <taxon>Rickettsia</taxon>
        <taxon>belli group</taxon>
    </lineage>
</organism>
<sequence length="342" mass="37076">MLDIKRKQDHIEINLTKNVESGLSSGFESVQFVHNALPEINYSSIDTTTTFLNKILQAPILISSMTGGTPRARDINCRLAAAAQKAGIAMGLGSMRTLLTEPSTLDTFTVRNNAPDIVLLANIGAVQLNYGVTPKQCQYLVDSVKADALILHLNVLQELTQPEGDKNWENLLPKIKEVVNYLSVPVIIKEVGFGLSKKTAKQFIDIGVKILDVAGSGGTSWSQVEAYRATNSLQNRIASSFINWGIPTLDSLKMVREASKDISVIASGGLKSGIDGAKAIRMGADIFGLAGPFLKAADVSENLVSEEIQLIIEQLKITMMCTGSRTINNLKKAELRMNHIPL</sequence>
<gene>
    <name evidence="1" type="primary">fni</name>
    <name type="ordered locus">RBE_0731</name>
</gene>